<protein>
    <recommendedName>
        <fullName>Wee1-like protein kinase 2</fullName>
        <ecNumber>2.7.10.2</ecNumber>
    </recommendedName>
    <alternativeName>
        <fullName>Wee1-like protein kinase 1B</fullName>
    </alternativeName>
    <alternativeName>
        <fullName>Wee1B kinase</fullName>
    </alternativeName>
</protein>
<evidence type="ECO:0000250" key="1"/>
<evidence type="ECO:0000255" key="2"/>
<evidence type="ECO:0000255" key="3">
    <source>
        <dbReference type="PROSITE-ProRule" id="PRU00159"/>
    </source>
</evidence>
<evidence type="ECO:0000255" key="4">
    <source>
        <dbReference type="PROSITE-ProRule" id="PRU10027"/>
    </source>
</evidence>
<evidence type="ECO:0000256" key="5">
    <source>
        <dbReference type="SAM" id="MobiDB-lite"/>
    </source>
</evidence>
<accession>E1BTE1</accession>
<feature type="chain" id="PRO_0000409527" description="Wee1-like protein kinase 2">
    <location>
        <begin position="1"/>
        <end position="565"/>
    </location>
</feature>
<feature type="domain" description="Protein kinase" evidence="3">
    <location>
        <begin position="217"/>
        <end position="493"/>
    </location>
</feature>
<feature type="region of interest" description="Disordered" evidence="5">
    <location>
        <begin position="531"/>
        <end position="553"/>
    </location>
</feature>
<feature type="coiled-coil region" evidence="2">
    <location>
        <begin position="496"/>
        <end position="522"/>
    </location>
</feature>
<feature type="active site" description="Proton acceptor" evidence="3 4">
    <location>
        <position position="344"/>
    </location>
</feature>
<feature type="binding site" evidence="3">
    <location>
        <begin position="223"/>
        <end position="231"/>
    </location>
    <ligand>
        <name>ATP</name>
        <dbReference type="ChEBI" id="CHEBI:30616"/>
    </ligand>
</feature>
<feature type="binding site" evidence="3">
    <location>
        <position position="246"/>
    </location>
    <ligand>
        <name>ATP</name>
        <dbReference type="ChEBI" id="CHEBI:30616"/>
    </ligand>
</feature>
<feature type="binding site" evidence="1">
    <location>
        <position position="349"/>
    </location>
    <ligand>
        <name>Mg(2+)</name>
        <dbReference type="ChEBI" id="CHEBI:18420"/>
    </ligand>
</feature>
<feature type="binding site" evidence="1">
    <location>
        <position position="383"/>
    </location>
    <ligand>
        <name>Mg(2+)</name>
        <dbReference type="ChEBI" id="CHEBI:18420"/>
    </ligand>
</feature>
<keyword id="KW-0067">ATP-binding</keyword>
<keyword id="KW-0175">Coiled coil</keyword>
<keyword id="KW-0418">Kinase</keyword>
<keyword id="KW-0460">Magnesium</keyword>
<keyword id="KW-0469">Meiosis</keyword>
<keyword id="KW-0479">Metal-binding</keyword>
<keyword id="KW-0547">Nucleotide-binding</keyword>
<keyword id="KW-0539">Nucleus</keyword>
<keyword id="KW-1185">Reference proteome</keyword>
<keyword id="KW-0808">Transferase</keyword>
<keyword id="KW-0829">Tyrosine-protein kinase</keyword>
<gene>
    <name type="primary">WEE2</name>
    <name type="synonym">WEE1B</name>
</gene>
<dbReference type="EC" id="2.7.10.2"/>
<dbReference type="EMBL" id="AADN02006380">
    <property type="status" value="NOT_ANNOTATED_CDS"/>
    <property type="molecule type" value="Genomic_DNA"/>
</dbReference>
<dbReference type="SMR" id="E1BTE1"/>
<dbReference type="FunCoup" id="E1BTE1">
    <property type="interactions" value="285"/>
</dbReference>
<dbReference type="STRING" id="9031.ENSGALP00000020972"/>
<dbReference type="PaxDb" id="9031-ENSGALP00000020972"/>
<dbReference type="VEuPathDB" id="HostDB:geneid_427918"/>
<dbReference type="eggNOG" id="KOG0601">
    <property type="taxonomic scope" value="Eukaryota"/>
</dbReference>
<dbReference type="InParanoid" id="E1BTE1"/>
<dbReference type="OrthoDB" id="5337378at2759"/>
<dbReference type="PhylomeDB" id="E1BTE1"/>
<dbReference type="TreeFam" id="TF101088"/>
<dbReference type="Proteomes" id="UP000000539">
    <property type="component" value="Unassembled WGS sequence"/>
</dbReference>
<dbReference type="GO" id="GO:0005737">
    <property type="term" value="C:cytoplasm"/>
    <property type="evidence" value="ECO:0000318"/>
    <property type="project" value="GO_Central"/>
</dbReference>
<dbReference type="GO" id="GO:0005634">
    <property type="term" value="C:nucleus"/>
    <property type="evidence" value="ECO:0000318"/>
    <property type="project" value="GO_Central"/>
</dbReference>
<dbReference type="GO" id="GO:0005524">
    <property type="term" value="F:ATP binding"/>
    <property type="evidence" value="ECO:0007669"/>
    <property type="project" value="UniProtKB-KW"/>
</dbReference>
<dbReference type="GO" id="GO:0000287">
    <property type="term" value="F:magnesium ion binding"/>
    <property type="evidence" value="ECO:0007669"/>
    <property type="project" value="InterPro"/>
</dbReference>
<dbReference type="GO" id="GO:0004715">
    <property type="term" value="F:non-membrane spanning protein tyrosine kinase activity"/>
    <property type="evidence" value="ECO:0007669"/>
    <property type="project" value="UniProtKB-EC"/>
</dbReference>
<dbReference type="GO" id="GO:0004713">
    <property type="term" value="F:protein tyrosine kinase activity"/>
    <property type="evidence" value="ECO:0000318"/>
    <property type="project" value="GO_Central"/>
</dbReference>
<dbReference type="GO" id="GO:0051321">
    <property type="term" value="P:meiotic cell cycle"/>
    <property type="evidence" value="ECO:0007669"/>
    <property type="project" value="UniProtKB-KW"/>
</dbReference>
<dbReference type="GO" id="GO:0000278">
    <property type="term" value="P:mitotic cell cycle"/>
    <property type="evidence" value="ECO:0007669"/>
    <property type="project" value="InterPro"/>
</dbReference>
<dbReference type="GO" id="GO:0060631">
    <property type="term" value="P:regulation of meiosis I"/>
    <property type="evidence" value="ECO:0000318"/>
    <property type="project" value="GO_Central"/>
</dbReference>
<dbReference type="FunFam" id="3.30.200.20:FF:000115">
    <property type="entry name" value="Wee1-like kinase 2"/>
    <property type="match status" value="1"/>
</dbReference>
<dbReference type="FunFam" id="1.10.510.10:FF:000217">
    <property type="entry name" value="Wee1-like protein kinase"/>
    <property type="match status" value="1"/>
</dbReference>
<dbReference type="Gene3D" id="3.30.200.20">
    <property type="entry name" value="Phosphorylase Kinase, domain 1"/>
    <property type="match status" value="1"/>
</dbReference>
<dbReference type="Gene3D" id="1.10.510.10">
    <property type="entry name" value="Transferase(Phosphotransferase) domain 1"/>
    <property type="match status" value="1"/>
</dbReference>
<dbReference type="InterPro" id="IPR050339">
    <property type="entry name" value="CC_SR_Kinase"/>
</dbReference>
<dbReference type="InterPro" id="IPR011009">
    <property type="entry name" value="Kinase-like_dom_sf"/>
</dbReference>
<dbReference type="InterPro" id="IPR000719">
    <property type="entry name" value="Prot_kinase_dom"/>
</dbReference>
<dbReference type="InterPro" id="IPR017441">
    <property type="entry name" value="Protein_kinase_ATP_BS"/>
</dbReference>
<dbReference type="InterPro" id="IPR008271">
    <property type="entry name" value="Ser/Thr_kinase_AS"/>
</dbReference>
<dbReference type="InterPro" id="IPR017164">
    <property type="entry name" value="Wee1-like_protein_kinase"/>
</dbReference>
<dbReference type="PANTHER" id="PTHR11042">
    <property type="entry name" value="EUKARYOTIC TRANSLATION INITIATION FACTOR 2-ALPHA KINASE EIF2-ALPHA KINASE -RELATED"/>
    <property type="match status" value="1"/>
</dbReference>
<dbReference type="PANTHER" id="PTHR11042:SF75">
    <property type="entry name" value="WEE1-LIKE PROTEIN KINASE 2"/>
    <property type="match status" value="1"/>
</dbReference>
<dbReference type="Pfam" id="PF00069">
    <property type="entry name" value="Pkinase"/>
    <property type="match status" value="1"/>
</dbReference>
<dbReference type="PIRSF" id="PIRSF037281">
    <property type="entry name" value="Wee1-like_protein_kinase"/>
    <property type="match status" value="1"/>
</dbReference>
<dbReference type="SMART" id="SM00220">
    <property type="entry name" value="S_TKc"/>
    <property type="match status" value="1"/>
</dbReference>
<dbReference type="SUPFAM" id="SSF56112">
    <property type="entry name" value="Protein kinase-like (PK-like)"/>
    <property type="match status" value="1"/>
</dbReference>
<dbReference type="PROSITE" id="PS00107">
    <property type="entry name" value="PROTEIN_KINASE_ATP"/>
    <property type="match status" value="1"/>
</dbReference>
<dbReference type="PROSITE" id="PS50011">
    <property type="entry name" value="PROTEIN_KINASE_DOM"/>
    <property type="match status" value="1"/>
</dbReference>
<dbReference type="PROSITE" id="PS00108">
    <property type="entry name" value="PROTEIN_KINASE_ST"/>
    <property type="match status" value="1"/>
</dbReference>
<sequence>MDDWENNDFIQRLDFSSCGEEGEDRSINEEDTLSSSPIKHCDFQKWNSPLPATPHRKLSEIFLSRTKSWVSPTLKSSPGVSRTHGNAETPLHITWKKLQLCDTPHTPKSLLSKTAFPSPGAKVPPKGFRHLRFTPGADLDDSTQASLVNINPFTPESYRQMLFLPNGKRKAREIKLVHLAQSFCEKAEVQRKDSAVRPADRCPLKDSNMVSRYQKEFLELERIGVGEFGSVYKCIKRLDGCVYAIKRSKRPLAGSSDEQLALREVYAHAVLGHHPHVVRYYSAWAEDDHMIIQNEHCNGGSLQDVLLENAKRGQYFPEAKLKEILLQVSMGLKYIHNSGLVHLDIKPSNIFICHKLVVEGQAGQEESDSDDEFSSGVMYKIGDLGHVTSIANPQVEEGDRRFLANEILQEQYFHLPKADIFALALTIALAAGAGPLPHNGAMWHHIRKGNIPSIPQKLPNGFIELLKLMIHPDPMERPSATALTKHPILRPSLGKAVQLQKQLNVEKCKTAMLERELKAARLAQTLMKDQPLGNANLQESETSPKKNNKRLVGGKNCRSFSFTVG</sequence>
<reference key="1">
    <citation type="journal article" date="2004" name="Nature">
        <title>Sequence and comparative analysis of the chicken genome provide unique perspectives on vertebrate evolution.</title>
        <authorList>
            <person name="Hillier L.W."/>
            <person name="Miller W."/>
            <person name="Birney E."/>
            <person name="Warren W."/>
            <person name="Hardison R.C."/>
            <person name="Ponting C.P."/>
            <person name="Bork P."/>
            <person name="Burt D.W."/>
            <person name="Groenen M.A.M."/>
            <person name="Delany M.E."/>
            <person name="Dodgson J.B."/>
            <person name="Chinwalla A.T."/>
            <person name="Cliften P.F."/>
            <person name="Clifton S.W."/>
            <person name="Delehaunty K.D."/>
            <person name="Fronick C."/>
            <person name="Fulton R.S."/>
            <person name="Graves T.A."/>
            <person name="Kremitzki C."/>
            <person name="Layman D."/>
            <person name="Magrini V."/>
            <person name="McPherson J.D."/>
            <person name="Miner T.L."/>
            <person name="Minx P."/>
            <person name="Nash W.E."/>
            <person name="Nhan M.N."/>
            <person name="Nelson J.O."/>
            <person name="Oddy L.G."/>
            <person name="Pohl C.S."/>
            <person name="Randall-Maher J."/>
            <person name="Smith S.M."/>
            <person name="Wallis J.W."/>
            <person name="Yang S.-P."/>
            <person name="Romanov M.N."/>
            <person name="Rondelli C.M."/>
            <person name="Paton B."/>
            <person name="Smith J."/>
            <person name="Morrice D."/>
            <person name="Daniels L."/>
            <person name="Tempest H.G."/>
            <person name="Robertson L."/>
            <person name="Masabanda J.S."/>
            <person name="Griffin D.K."/>
            <person name="Vignal A."/>
            <person name="Fillon V."/>
            <person name="Jacobbson L."/>
            <person name="Kerje S."/>
            <person name="Andersson L."/>
            <person name="Crooijmans R.P."/>
            <person name="Aerts J."/>
            <person name="van der Poel J.J."/>
            <person name="Ellegren H."/>
            <person name="Caldwell R.B."/>
            <person name="Hubbard S.J."/>
            <person name="Grafham D.V."/>
            <person name="Kierzek A.M."/>
            <person name="McLaren S.R."/>
            <person name="Overton I.M."/>
            <person name="Arakawa H."/>
            <person name="Beattie K.J."/>
            <person name="Bezzubov Y."/>
            <person name="Boardman P.E."/>
            <person name="Bonfield J.K."/>
            <person name="Croning M.D.R."/>
            <person name="Davies R.M."/>
            <person name="Francis M.D."/>
            <person name="Humphray S.J."/>
            <person name="Scott C.E."/>
            <person name="Taylor R.G."/>
            <person name="Tickle C."/>
            <person name="Brown W.R.A."/>
            <person name="Rogers J."/>
            <person name="Buerstedde J.-M."/>
            <person name="Wilson S.A."/>
            <person name="Stubbs L."/>
            <person name="Ovcharenko I."/>
            <person name="Gordon L."/>
            <person name="Lucas S."/>
            <person name="Miller M.M."/>
            <person name="Inoko H."/>
            <person name="Shiina T."/>
            <person name="Kaufman J."/>
            <person name="Salomonsen J."/>
            <person name="Skjoedt K."/>
            <person name="Wong G.K.-S."/>
            <person name="Wang J."/>
            <person name="Liu B."/>
            <person name="Wang J."/>
            <person name="Yu J."/>
            <person name="Yang H."/>
            <person name="Nefedov M."/>
            <person name="Koriabine M."/>
            <person name="Dejong P.J."/>
            <person name="Goodstadt L."/>
            <person name="Webber C."/>
            <person name="Dickens N.J."/>
            <person name="Letunic I."/>
            <person name="Suyama M."/>
            <person name="Torrents D."/>
            <person name="von Mering C."/>
            <person name="Zdobnov E.M."/>
            <person name="Makova K."/>
            <person name="Nekrutenko A."/>
            <person name="Elnitski L."/>
            <person name="Eswara P."/>
            <person name="King D.C."/>
            <person name="Yang S.-P."/>
            <person name="Tyekucheva S."/>
            <person name="Radakrishnan A."/>
            <person name="Harris R.S."/>
            <person name="Chiaromonte F."/>
            <person name="Taylor J."/>
            <person name="He J."/>
            <person name="Rijnkels M."/>
            <person name="Griffiths-Jones S."/>
            <person name="Ureta-Vidal A."/>
            <person name="Hoffman M.M."/>
            <person name="Severin J."/>
            <person name="Searle S.M.J."/>
            <person name="Law A.S."/>
            <person name="Speed D."/>
            <person name="Waddington D."/>
            <person name="Cheng Z."/>
            <person name="Tuzun E."/>
            <person name="Eichler E."/>
            <person name="Bao Z."/>
            <person name="Flicek P."/>
            <person name="Shteynberg D.D."/>
            <person name="Brent M.R."/>
            <person name="Bye J.M."/>
            <person name="Huckle E.J."/>
            <person name="Chatterji S."/>
            <person name="Dewey C."/>
            <person name="Pachter L."/>
            <person name="Kouranov A."/>
            <person name="Mourelatos Z."/>
            <person name="Hatzigeorgiou A.G."/>
            <person name="Paterson A.H."/>
            <person name="Ivarie R."/>
            <person name="Brandstrom M."/>
            <person name="Axelsson E."/>
            <person name="Backstrom N."/>
            <person name="Berlin S."/>
            <person name="Webster M.T."/>
            <person name="Pourquie O."/>
            <person name="Reymond A."/>
            <person name="Ucla C."/>
            <person name="Antonarakis S.E."/>
            <person name="Long M."/>
            <person name="Emerson J.J."/>
            <person name="Betran E."/>
            <person name="Dupanloup I."/>
            <person name="Kaessmann H."/>
            <person name="Hinrichs A.S."/>
            <person name="Bejerano G."/>
            <person name="Furey T.S."/>
            <person name="Harte R.A."/>
            <person name="Raney B."/>
            <person name="Siepel A."/>
            <person name="Kent W.J."/>
            <person name="Haussler D."/>
            <person name="Eyras E."/>
            <person name="Castelo R."/>
            <person name="Abril J.F."/>
            <person name="Castellano S."/>
            <person name="Camara F."/>
            <person name="Parra G."/>
            <person name="Guigo R."/>
            <person name="Bourque G."/>
            <person name="Tesler G."/>
            <person name="Pevzner P.A."/>
            <person name="Smit A."/>
            <person name="Fulton L.A."/>
            <person name="Mardis E.R."/>
            <person name="Wilson R.K."/>
        </authorList>
    </citation>
    <scope>NUCLEOTIDE SEQUENCE [LARGE SCALE GENOMIC DNA]</scope>
</reference>
<organism>
    <name type="scientific">Gallus gallus</name>
    <name type="common">Chicken</name>
    <dbReference type="NCBI Taxonomy" id="9031"/>
    <lineage>
        <taxon>Eukaryota</taxon>
        <taxon>Metazoa</taxon>
        <taxon>Chordata</taxon>
        <taxon>Craniata</taxon>
        <taxon>Vertebrata</taxon>
        <taxon>Euteleostomi</taxon>
        <taxon>Archelosauria</taxon>
        <taxon>Archosauria</taxon>
        <taxon>Dinosauria</taxon>
        <taxon>Saurischia</taxon>
        <taxon>Theropoda</taxon>
        <taxon>Coelurosauria</taxon>
        <taxon>Aves</taxon>
        <taxon>Neognathae</taxon>
        <taxon>Galloanserae</taxon>
        <taxon>Galliformes</taxon>
        <taxon>Phasianidae</taxon>
        <taxon>Phasianinae</taxon>
        <taxon>Gallus</taxon>
    </lineage>
</organism>
<name>WEE2_CHICK</name>
<comment type="function">
    <text evidence="1">Oocyte-specific protein tyrosine kinase that phosphorylates and inhibits CDK1 and acts as a key regulator of meiosis. Required to maintain meiotic arrest in oocytes by phosphorylating CDK1 at 'Tyr-15', leading to inhibit CDK1 activity and prevent meiotic reentry (By similarity).</text>
</comment>
<comment type="catalytic activity">
    <reaction evidence="4">
        <text>L-tyrosyl-[protein] + ATP = O-phospho-L-tyrosyl-[protein] + ADP + H(+)</text>
        <dbReference type="Rhea" id="RHEA:10596"/>
        <dbReference type="Rhea" id="RHEA-COMP:10136"/>
        <dbReference type="Rhea" id="RHEA-COMP:20101"/>
        <dbReference type="ChEBI" id="CHEBI:15378"/>
        <dbReference type="ChEBI" id="CHEBI:30616"/>
        <dbReference type="ChEBI" id="CHEBI:46858"/>
        <dbReference type="ChEBI" id="CHEBI:61978"/>
        <dbReference type="ChEBI" id="CHEBI:456216"/>
        <dbReference type="EC" id="2.7.10.2"/>
    </reaction>
</comment>
<comment type="subcellular location">
    <subcellularLocation>
        <location evidence="1">Nucleus</location>
    </subcellularLocation>
</comment>
<comment type="similarity">
    <text evidence="3">Belongs to the protein kinase superfamily. Ser/Thr protein kinase family. WEE1 subfamily.</text>
</comment>
<proteinExistence type="inferred from homology"/>